<evidence type="ECO:0000255" key="1">
    <source>
        <dbReference type="HAMAP-Rule" id="MF_00736"/>
    </source>
</evidence>
<evidence type="ECO:0000305" key="2"/>
<reference key="1">
    <citation type="journal article" date="2004" name="Nucleic Acids Res.">
        <title>Genome sequence of Symbiobacterium thermophilum, an uncultivable bacterium that depends on microbial commensalism.</title>
        <authorList>
            <person name="Ueda K."/>
            <person name="Yamashita A."/>
            <person name="Ishikawa J."/>
            <person name="Shimada M."/>
            <person name="Watsuji T."/>
            <person name="Morimura K."/>
            <person name="Ikeda H."/>
            <person name="Hattori M."/>
            <person name="Beppu T."/>
        </authorList>
    </citation>
    <scope>NUCLEOTIDE SEQUENCE [LARGE SCALE GENOMIC DNA]</scope>
    <source>
        <strain>DSM 24528 / JCM 14929 / IAM 14863 / T</strain>
    </source>
</reference>
<feature type="chain" id="PRO_0000104392" description="Large ribosomal subunit protein uL11">
    <location>
        <begin position="1"/>
        <end position="140"/>
    </location>
</feature>
<name>RL11_SYMTH</name>
<proteinExistence type="inferred from homology"/>
<sequence>MAKKVTAVIKLALPAGKATPAPPVGPALGAHGVNIMAFCKEYNERTKDQVGLVIPVEITVYEDRSFTFILKTPPTAVLIKKALGIETASGVPNKQKVGKLTDAQVEEIAKIKMPDLNANDLEAAKRMVRGTARSMGVDVE</sequence>
<accession>Q67JS8</accession>
<gene>
    <name evidence="1" type="primary">rplK</name>
    <name type="ordered locus">STH3090</name>
</gene>
<dbReference type="EMBL" id="AP006840">
    <property type="protein sequence ID" value="BAD42072.1"/>
    <property type="molecule type" value="Genomic_DNA"/>
</dbReference>
<dbReference type="RefSeq" id="WP_011197205.1">
    <property type="nucleotide sequence ID" value="NC_006177.1"/>
</dbReference>
<dbReference type="SMR" id="Q67JS8"/>
<dbReference type="STRING" id="292459.STH3090"/>
<dbReference type="KEGG" id="sth:STH3090"/>
<dbReference type="eggNOG" id="COG0080">
    <property type="taxonomic scope" value="Bacteria"/>
</dbReference>
<dbReference type="HOGENOM" id="CLU_074237_2_1_9"/>
<dbReference type="OrthoDB" id="9802408at2"/>
<dbReference type="Proteomes" id="UP000000417">
    <property type="component" value="Chromosome"/>
</dbReference>
<dbReference type="GO" id="GO:0022625">
    <property type="term" value="C:cytosolic large ribosomal subunit"/>
    <property type="evidence" value="ECO:0007669"/>
    <property type="project" value="TreeGrafter"/>
</dbReference>
<dbReference type="GO" id="GO:0070180">
    <property type="term" value="F:large ribosomal subunit rRNA binding"/>
    <property type="evidence" value="ECO:0007669"/>
    <property type="project" value="UniProtKB-UniRule"/>
</dbReference>
<dbReference type="GO" id="GO:0003735">
    <property type="term" value="F:structural constituent of ribosome"/>
    <property type="evidence" value="ECO:0007669"/>
    <property type="project" value="InterPro"/>
</dbReference>
<dbReference type="GO" id="GO:0006412">
    <property type="term" value="P:translation"/>
    <property type="evidence" value="ECO:0007669"/>
    <property type="project" value="UniProtKB-UniRule"/>
</dbReference>
<dbReference type="CDD" id="cd00349">
    <property type="entry name" value="Ribosomal_L11"/>
    <property type="match status" value="1"/>
</dbReference>
<dbReference type="FunFam" id="1.10.10.250:FF:000001">
    <property type="entry name" value="50S ribosomal protein L11"/>
    <property type="match status" value="1"/>
</dbReference>
<dbReference type="FunFam" id="3.30.1550.10:FF:000001">
    <property type="entry name" value="50S ribosomal protein L11"/>
    <property type="match status" value="1"/>
</dbReference>
<dbReference type="Gene3D" id="1.10.10.250">
    <property type="entry name" value="Ribosomal protein L11, C-terminal domain"/>
    <property type="match status" value="1"/>
</dbReference>
<dbReference type="Gene3D" id="3.30.1550.10">
    <property type="entry name" value="Ribosomal protein L11/L12, N-terminal domain"/>
    <property type="match status" value="1"/>
</dbReference>
<dbReference type="HAMAP" id="MF_00736">
    <property type="entry name" value="Ribosomal_uL11"/>
    <property type="match status" value="1"/>
</dbReference>
<dbReference type="InterPro" id="IPR000911">
    <property type="entry name" value="Ribosomal_uL11"/>
</dbReference>
<dbReference type="InterPro" id="IPR006519">
    <property type="entry name" value="Ribosomal_uL11_bac-typ"/>
</dbReference>
<dbReference type="InterPro" id="IPR020783">
    <property type="entry name" value="Ribosomal_uL11_C"/>
</dbReference>
<dbReference type="InterPro" id="IPR036769">
    <property type="entry name" value="Ribosomal_uL11_C_sf"/>
</dbReference>
<dbReference type="InterPro" id="IPR020785">
    <property type="entry name" value="Ribosomal_uL11_CS"/>
</dbReference>
<dbReference type="InterPro" id="IPR020784">
    <property type="entry name" value="Ribosomal_uL11_N"/>
</dbReference>
<dbReference type="InterPro" id="IPR036796">
    <property type="entry name" value="Ribosomal_uL11_N_sf"/>
</dbReference>
<dbReference type="NCBIfam" id="TIGR01632">
    <property type="entry name" value="L11_bact"/>
    <property type="match status" value="1"/>
</dbReference>
<dbReference type="PANTHER" id="PTHR11661">
    <property type="entry name" value="60S RIBOSOMAL PROTEIN L12"/>
    <property type="match status" value="1"/>
</dbReference>
<dbReference type="PANTHER" id="PTHR11661:SF1">
    <property type="entry name" value="LARGE RIBOSOMAL SUBUNIT PROTEIN UL11M"/>
    <property type="match status" value="1"/>
</dbReference>
<dbReference type="Pfam" id="PF00298">
    <property type="entry name" value="Ribosomal_L11"/>
    <property type="match status" value="1"/>
</dbReference>
<dbReference type="Pfam" id="PF03946">
    <property type="entry name" value="Ribosomal_L11_N"/>
    <property type="match status" value="1"/>
</dbReference>
<dbReference type="SMART" id="SM00649">
    <property type="entry name" value="RL11"/>
    <property type="match status" value="1"/>
</dbReference>
<dbReference type="SUPFAM" id="SSF54747">
    <property type="entry name" value="Ribosomal L11/L12e N-terminal domain"/>
    <property type="match status" value="1"/>
</dbReference>
<dbReference type="SUPFAM" id="SSF46906">
    <property type="entry name" value="Ribosomal protein L11, C-terminal domain"/>
    <property type="match status" value="1"/>
</dbReference>
<dbReference type="PROSITE" id="PS00359">
    <property type="entry name" value="RIBOSOMAL_L11"/>
    <property type="match status" value="1"/>
</dbReference>
<comment type="function">
    <text evidence="1">Forms part of the ribosomal stalk which helps the ribosome interact with GTP-bound translation factors.</text>
</comment>
<comment type="subunit">
    <text evidence="1">Part of the ribosomal stalk of the 50S ribosomal subunit. Interacts with L10 and the large rRNA to form the base of the stalk. L10 forms an elongated spine to which L12 dimers bind in a sequential fashion forming a multimeric L10(L12)X complex.</text>
</comment>
<comment type="PTM">
    <text evidence="1">One or more lysine residues are methylated.</text>
</comment>
<comment type="similarity">
    <text evidence="1">Belongs to the universal ribosomal protein uL11 family.</text>
</comment>
<keyword id="KW-0488">Methylation</keyword>
<keyword id="KW-1185">Reference proteome</keyword>
<keyword id="KW-0687">Ribonucleoprotein</keyword>
<keyword id="KW-0689">Ribosomal protein</keyword>
<keyword id="KW-0694">RNA-binding</keyword>
<keyword id="KW-0699">rRNA-binding</keyword>
<organism>
    <name type="scientific">Symbiobacterium thermophilum (strain DSM 24528 / JCM 14929 / IAM 14863 / T)</name>
    <dbReference type="NCBI Taxonomy" id="292459"/>
    <lineage>
        <taxon>Bacteria</taxon>
        <taxon>Bacillati</taxon>
        <taxon>Bacillota</taxon>
        <taxon>Clostridia</taxon>
        <taxon>Eubacteriales</taxon>
        <taxon>Symbiobacteriaceae</taxon>
        <taxon>Symbiobacterium</taxon>
    </lineage>
</organism>
<protein>
    <recommendedName>
        <fullName evidence="1">Large ribosomal subunit protein uL11</fullName>
    </recommendedName>
    <alternativeName>
        <fullName evidence="2">50S ribosomal protein L11</fullName>
    </alternativeName>
</protein>